<comment type="function">
    <text evidence="1">Involved in the biosynthesis of branched-chain amino acids (BCAA). Catalyzes an alkyl-migration followed by a ketol-acid reduction of (S)-2-acetolactate (S2AL) to yield (R)-2,3-dihydroxy-isovalerate. In the isomerase reaction, S2AL is rearranged via a Mg-dependent methyl migration to produce 3-hydroxy-3-methyl-2-ketobutyrate (HMKB). In the reductase reaction, this 2-ketoacid undergoes a metal-dependent reduction by NADPH to yield (R)-2,3-dihydroxy-isovalerate.</text>
</comment>
<comment type="catalytic activity">
    <reaction evidence="1">
        <text>(2R)-2,3-dihydroxy-3-methylbutanoate + NADP(+) = (2S)-2-acetolactate + NADPH + H(+)</text>
        <dbReference type="Rhea" id="RHEA:22068"/>
        <dbReference type="ChEBI" id="CHEBI:15378"/>
        <dbReference type="ChEBI" id="CHEBI:49072"/>
        <dbReference type="ChEBI" id="CHEBI:57783"/>
        <dbReference type="ChEBI" id="CHEBI:58349"/>
        <dbReference type="ChEBI" id="CHEBI:58476"/>
        <dbReference type="EC" id="1.1.1.86"/>
    </reaction>
</comment>
<comment type="catalytic activity">
    <reaction evidence="1">
        <text>(2R,3R)-2,3-dihydroxy-3-methylpentanoate + NADP(+) = (S)-2-ethyl-2-hydroxy-3-oxobutanoate + NADPH + H(+)</text>
        <dbReference type="Rhea" id="RHEA:13493"/>
        <dbReference type="ChEBI" id="CHEBI:15378"/>
        <dbReference type="ChEBI" id="CHEBI:49256"/>
        <dbReference type="ChEBI" id="CHEBI:49258"/>
        <dbReference type="ChEBI" id="CHEBI:57783"/>
        <dbReference type="ChEBI" id="CHEBI:58349"/>
        <dbReference type="EC" id="1.1.1.86"/>
    </reaction>
</comment>
<comment type="cofactor">
    <cofactor evidence="1">
        <name>Mg(2+)</name>
        <dbReference type="ChEBI" id="CHEBI:18420"/>
    </cofactor>
    <text evidence="1">Binds 2 magnesium ions per subunit.</text>
</comment>
<comment type="pathway">
    <text evidence="1">Amino-acid biosynthesis; L-isoleucine biosynthesis; L-isoleucine from 2-oxobutanoate: step 2/4.</text>
</comment>
<comment type="pathway">
    <text evidence="1">Amino-acid biosynthesis; L-valine biosynthesis; L-valine from pyruvate: step 2/4.</text>
</comment>
<comment type="similarity">
    <text evidence="1">Belongs to the ketol-acid reductoisomerase family.</text>
</comment>
<sequence>MSNDTQPKIAIIGYGSQGRAHALNLRDSGFDVTVGLRPGGPTESKAQADGFTVVAPSEAVKSADLVAILTPDMVQKKLYEDVIAPNMKQGACLLFAHGLNVHFDMITPRADLDVVLVAPKGPGALVRREYEIGRGVPCIYAVYQDTSGKAEQFALTYAGGLGGARANIIKTTFKEETETDLFGEQAVLCGGASSLVQAGFEVLVEAGYQPEIAYYEVLHELKLIVDLFYEGGITRMLEFVSETAQYGDYVSGPRVIDASTKARMKDVLTDIQNGTFTKNWVAEYEAGLPNYTKFKQADLEHPIEEVGKKLRAKMVWLNGEQQAAAAPANQQAA</sequence>
<proteinExistence type="inferred from homology"/>
<evidence type="ECO:0000255" key="1">
    <source>
        <dbReference type="HAMAP-Rule" id="MF_00435"/>
    </source>
</evidence>
<evidence type="ECO:0000255" key="2">
    <source>
        <dbReference type="PROSITE-ProRule" id="PRU01197"/>
    </source>
</evidence>
<evidence type="ECO:0000255" key="3">
    <source>
        <dbReference type="PROSITE-ProRule" id="PRU01198"/>
    </source>
</evidence>
<organism>
    <name type="scientific">Xanthomonas oryzae pv. oryzae (strain MAFF 311018)</name>
    <dbReference type="NCBI Taxonomy" id="342109"/>
    <lineage>
        <taxon>Bacteria</taxon>
        <taxon>Pseudomonadati</taxon>
        <taxon>Pseudomonadota</taxon>
        <taxon>Gammaproteobacteria</taxon>
        <taxon>Lysobacterales</taxon>
        <taxon>Lysobacteraceae</taxon>
        <taxon>Xanthomonas</taxon>
    </lineage>
</organism>
<dbReference type="EC" id="1.1.1.86" evidence="1"/>
<dbReference type="EMBL" id="AP008229">
    <property type="protein sequence ID" value="BAE67620.1"/>
    <property type="molecule type" value="Genomic_DNA"/>
</dbReference>
<dbReference type="RefSeq" id="WP_011257812.1">
    <property type="nucleotide sequence ID" value="NC_007705.1"/>
</dbReference>
<dbReference type="SMR" id="Q2P757"/>
<dbReference type="KEGG" id="xom:XOO0865"/>
<dbReference type="HOGENOM" id="CLU_033821_0_1_6"/>
<dbReference type="UniPathway" id="UPA00047">
    <property type="reaction ID" value="UER00056"/>
</dbReference>
<dbReference type="UniPathway" id="UPA00049">
    <property type="reaction ID" value="UER00060"/>
</dbReference>
<dbReference type="GO" id="GO:0005829">
    <property type="term" value="C:cytosol"/>
    <property type="evidence" value="ECO:0007669"/>
    <property type="project" value="TreeGrafter"/>
</dbReference>
<dbReference type="GO" id="GO:0004455">
    <property type="term" value="F:ketol-acid reductoisomerase activity"/>
    <property type="evidence" value="ECO:0007669"/>
    <property type="project" value="UniProtKB-UniRule"/>
</dbReference>
<dbReference type="GO" id="GO:0000287">
    <property type="term" value="F:magnesium ion binding"/>
    <property type="evidence" value="ECO:0007669"/>
    <property type="project" value="UniProtKB-UniRule"/>
</dbReference>
<dbReference type="GO" id="GO:0050661">
    <property type="term" value="F:NADP binding"/>
    <property type="evidence" value="ECO:0007669"/>
    <property type="project" value="InterPro"/>
</dbReference>
<dbReference type="GO" id="GO:0009097">
    <property type="term" value="P:isoleucine biosynthetic process"/>
    <property type="evidence" value="ECO:0007669"/>
    <property type="project" value="UniProtKB-UniRule"/>
</dbReference>
<dbReference type="GO" id="GO:0009099">
    <property type="term" value="P:L-valine biosynthetic process"/>
    <property type="evidence" value="ECO:0007669"/>
    <property type="project" value="UniProtKB-UniRule"/>
</dbReference>
<dbReference type="FunFam" id="3.40.50.720:FF:000023">
    <property type="entry name" value="Ketol-acid reductoisomerase (NADP(+))"/>
    <property type="match status" value="1"/>
</dbReference>
<dbReference type="Gene3D" id="6.10.240.10">
    <property type="match status" value="1"/>
</dbReference>
<dbReference type="Gene3D" id="3.40.50.720">
    <property type="entry name" value="NAD(P)-binding Rossmann-like Domain"/>
    <property type="match status" value="1"/>
</dbReference>
<dbReference type="HAMAP" id="MF_00435">
    <property type="entry name" value="IlvC"/>
    <property type="match status" value="1"/>
</dbReference>
<dbReference type="InterPro" id="IPR008927">
    <property type="entry name" value="6-PGluconate_DH-like_C_sf"/>
</dbReference>
<dbReference type="InterPro" id="IPR013023">
    <property type="entry name" value="KARI"/>
</dbReference>
<dbReference type="InterPro" id="IPR000506">
    <property type="entry name" value="KARI_C"/>
</dbReference>
<dbReference type="InterPro" id="IPR013116">
    <property type="entry name" value="KARI_N"/>
</dbReference>
<dbReference type="InterPro" id="IPR014359">
    <property type="entry name" value="KARI_prok"/>
</dbReference>
<dbReference type="InterPro" id="IPR036291">
    <property type="entry name" value="NAD(P)-bd_dom_sf"/>
</dbReference>
<dbReference type="NCBIfam" id="TIGR00465">
    <property type="entry name" value="ilvC"/>
    <property type="match status" value="1"/>
</dbReference>
<dbReference type="NCBIfam" id="NF004017">
    <property type="entry name" value="PRK05479.1"/>
    <property type="match status" value="1"/>
</dbReference>
<dbReference type="PANTHER" id="PTHR21371">
    <property type="entry name" value="KETOL-ACID REDUCTOISOMERASE, MITOCHONDRIAL"/>
    <property type="match status" value="1"/>
</dbReference>
<dbReference type="PANTHER" id="PTHR21371:SF1">
    <property type="entry name" value="KETOL-ACID REDUCTOISOMERASE, MITOCHONDRIAL"/>
    <property type="match status" value="1"/>
</dbReference>
<dbReference type="Pfam" id="PF01450">
    <property type="entry name" value="KARI_C"/>
    <property type="match status" value="1"/>
</dbReference>
<dbReference type="Pfam" id="PF07991">
    <property type="entry name" value="KARI_N"/>
    <property type="match status" value="1"/>
</dbReference>
<dbReference type="PIRSF" id="PIRSF000116">
    <property type="entry name" value="IlvC_gammaproteo"/>
    <property type="match status" value="1"/>
</dbReference>
<dbReference type="SUPFAM" id="SSF48179">
    <property type="entry name" value="6-phosphogluconate dehydrogenase C-terminal domain-like"/>
    <property type="match status" value="1"/>
</dbReference>
<dbReference type="SUPFAM" id="SSF51735">
    <property type="entry name" value="NAD(P)-binding Rossmann-fold domains"/>
    <property type="match status" value="1"/>
</dbReference>
<dbReference type="PROSITE" id="PS51851">
    <property type="entry name" value="KARI_C"/>
    <property type="match status" value="1"/>
</dbReference>
<dbReference type="PROSITE" id="PS51850">
    <property type="entry name" value="KARI_N"/>
    <property type="match status" value="1"/>
</dbReference>
<keyword id="KW-0028">Amino-acid biosynthesis</keyword>
<keyword id="KW-0100">Branched-chain amino acid biosynthesis</keyword>
<keyword id="KW-0460">Magnesium</keyword>
<keyword id="KW-0479">Metal-binding</keyword>
<keyword id="KW-0521">NADP</keyword>
<keyword id="KW-0560">Oxidoreductase</keyword>
<name>ILVC_XANOM</name>
<gene>
    <name evidence="1" type="primary">ilvC</name>
    <name type="ordered locus">XOO0865</name>
</gene>
<accession>Q2P757</accession>
<feature type="chain" id="PRO_0000252800" description="Ketol-acid reductoisomerase (NADP(+))">
    <location>
        <begin position="1"/>
        <end position="333"/>
    </location>
</feature>
<feature type="domain" description="KARI N-terminal Rossmann" evidence="2">
    <location>
        <begin position="1"/>
        <end position="171"/>
    </location>
</feature>
<feature type="domain" description="KARI C-terminal knotted" evidence="3">
    <location>
        <begin position="172"/>
        <end position="317"/>
    </location>
</feature>
<feature type="active site" evidence="1">
    <location>
        <position position="97"/>
    </location>
</feature>
<feature type="binding site" evidence="1">
    <location>
        <begin position="14"/>
        <end position="17"/>
    </location>
    <ligand>
        <name>NADP(+)</name>
        <dbReference type="ChEBI" id="CHEBI:58349"/>
    </ligand>
</feature>
<feature type="binding site" evidence="1">
    <location>
        <position position="37"/>
    </location>
    <ligand>
        <name>NADP(+)</name>
        <dbReference type="ChEBI" id="CHEBI:58349"/>
    </ligand>
</feature>
<feature type="binding site" evidence="1">
    <location>
        <position position="42"/>
    </location>
    <ligand>
        <name>NADP(+)</name>
        <dbReference type="ChEBI" id="CHEBI:58349"/>
    </ligand>
</feature>
<feature type="binding site" evidence="1">
    <location>
        <begin position="72"/>
        <end position="75"/>
    </location>
    <ligand>
        <name>NADP(+)</name>
        <dbReference type="ChEBI" id="CHEBI:58349"/>
    </ligand>
</feature>
<feature type="binding site" evidence="1">
    <location>
        <position position="123"/>
    </location>
    <ligand>
        <name>NADP(+)</name>
        <dbReference type="ChEBI" id="CHEBI:58349"/>
    </ligand>
</feature>
<feature type="binding site" evidence="1">
    <location>
        <position position="180"/>
    </location>
    <ligand>
        <name>Mg(2+)</name>
        <dbReference type="ChEBI" id="CHEBI:18420"/>
        <label>1</label>
    </ligand>
</feature>
<feature type="binding site" evidence="1">
    <location>
        <position position="180"/>
    </location>
    <ligand>
        <name>Mg(2+)</name>
        <dbReference type="ChEBI" id="CHEBI:18420"/>
        <label>2</label>
    </ligand>
</feature>
<feature type="binding site" evidence="1">
    <location>
        <position position="184"/>
    </location>
    <ligand>
        <name>Mg(2+)</name>
        <dbReference type="ChEBI" id="CHEBI:18420"/>
        <label>1</label>
    </ligand>
</feature>
<feature type="binding site" evidence="1">
    <location>
        <position position="216"/>
    </location>
    <ligand>
        <name>Mg(2+)</name>
        <dbReference type="ChEBI" id="CHEBI:18420"/>
        <label>2</label>
    </ligand>
</feature>
<feature type="binding site" evidence="1">
    <location>
        <position position="220"/>
    </location>
    <ligand>
        <name>Mg(2+)</name>
        <dbReference type="ChEBI" id="CHEBI:18420"/>
        <label>2</label>
    </ligand>
</feature>
<feature type="binding site" evidence="1">
    <location>
        <position position="241"/>
    </location>
    <ligand>
        <name>substrate</name>
    </ligand>
</feature>
<reference key="1">
    <citation type="journal article" date="2005" name="Jpn. Agric. Res. Q.">
        <title>Genome sequence of Xanthomonas oryzae pv. oryzae suggests contribution of large numbers of effector genes and insertion sequences to its race diversity.</title>
        <authorList>
            <person name="Ochiai H."/>
            <person name="Inoue Y."/>
            <person name="Takeya M."/>
            <person name="Sasaki A."/>
            <person name="Kaku H."/>
        </authorList>
    </citation>
    <scope>NUCLEOTIDE SEQUENCE [LARGE SCALE GENOMIC DNA]</scope>
    <source>
        <strain>MAFF 311018</strain>
    </source>
</reference>
<protein>
    <recommendedName>
        <fullName evidence="1">Ketol-acid reductoisomerase (NADP(+))</fullName>
        <shortName evidence="1">KARI</shortName>
        <ecNumber evidence="1">1.1.1.86</ecNumber>
    </recommendedName>
    <alternativeName>
        <fullName evidence="1">Acetohydroxy-acid isomeroreductase</fullName>
        <shortName evidence="1">AHIR</shortName>
    </alternativeName>
    <alternativeName>
        <fullName evidence="1">Alpha-keto-beta-hydroxylacyl reductoisomerase</fullName>
    </alternativeName>
    <alternativeName>
        <fullName evidence="1">Ketol-acid reductoisomerase type 1</fullName>
    </alternativeName>
    <alternativeName>
        <fullName evidence="1">Ketol-acid reductoisomerase type I</fullName>
    </alternativeName>
</protein>